<accession>Q0CCY0</accession>
<protein>
    <recommendedName>
        <fullName evidence="10">Glutathione S-transferase-like protein gedE</fullName>
        <ecNumber evidence="12">2.5.1.-</ecNumber>
    </recommendedName>
    <alternativeName>
        <fullName evidence="10">Geodin synthesis protein E</fullName>
    </alternativeName>
</protein>
<sequence length="226" mass="25639">MSKLLPIKVWGQGGPNPPRVAIILEELGLPYEFMPIQLSQVKEPEYLAINPNGRLPAIYDPNTDLTLWESGAIVEYLVERYDTAHDISFPRDTNDAQHARQWLFFQASGQGPYYGQACWFKKYHPEPVPSALERYIKEMNRVSGVVDGYLAKQPVPPGGDGPWLVGNKCSFADLAWVSWQMTLKKIIQTEDGYDVENFPHLKNWLDRMVAREPVKKVLSAVMPPPS</sequence>
<dbReference type="EC" id="2.5.1.-" evidence="12"/>
<dbReference type="EMBL" id="CH476605">
    <property type="protein sequence ID" value="EAU31627.1"/>
    <property type="molecule type" value="Genomic_DNA"/>
</dbReference>
<dbReference type="RefSeq" id="XP_001217593.1">
    <property type="nucleotide sequence ID" value="XM_001217592.1"/>
</dbReference>
<dbReference type="SMR" id="Q0CCY0"/>
<dbReference type="STRING" id="341663.Q0CCY0"/>
<dbReference type="EnsemblFungi" id="EAU31627">
    <property type="protein sequence ID" value="EAU31627"/>
    <property type="gene ID" value="ATEG_08454"/>
</dbReference>
<dbReference type="GeneID" id="4353104"/>
<dbReference type="VEuPathDB" id="FungiDB:ATEG_08454"/>
<dbReference type="eggNOG" id="KOG0867">
    <property type="taxonomic scope" value="Eukaryota"/>
</dbReference>
<dbReference type="HOGENOM" id="CLU_011226_14_2_1"/>
<dbReference type="OMA" id="IKPIQLY"/>
<dbReference type="OrthoDB" id="422574at2759"/>
<dbReference type="Proteomes" id="UP000007963">
    <property type="component" value="Unassembled WGS sequence"/>
</dbReference>
<dbReference type="GO" id="GO:0016740">
    <property type="term" value="F:transferase activity"/>
    <property type="evidence" value="ECO:0007669"/>
    <property type="project" value="UniProtKB-KW"/>
</dbReference>
<dbReference type="CDD" id="cd10293">
    <property type="entry name" value="GST_C_Ure2p"/>
    <property type="match status" value="1"/>
</dbReference>
<dbReference type="CDD" id="cd03048">
    <property type="entry name" value="GST_N_Ure2p_like"/>
    <property type="match status" value="1"/>
</dbReference>
<dbReference type="Gene3D" id="1.20.1050.10">
    <property type="match status" value="1"/>
</dbReference>
<dbReference type="Gene3D" id="3.40.30.10">
    <property type="entry name" value="Glutaredoxin"/>
    <property type="match status" value="1"/>
</dbReference>
<dbReference type="InterPro" id="IPR010987">
    <property type="entry name" value="Glutathione-S-Trfase_C-like"/>
</dbReference>
<dbReference type="InterPro" id="IPR036282">
    <property type="entry name" value="Glutathione-S-Trfase_C_sf"/>
</dbReference>
<dbReference type="InterPro" id="IPR040079">
    <property type="entry name" value="Glutathione_S-Trfase"/>
</dbReference>
<dbReference type="InterPro" id="IPR004045">
    <property type="entry name" value="Glutathione_S-Trfase_N"/>
</dbReference>
<dbReference type="InterPro" id="IPR004046">
    <property type="entry name" value="GST_C"/>
</dbReference>
<dbReference type="InterPro" id="IPR036249">
    <property type="entry name" value="Thioredoxin-like_sf"/>
</dbReference>
<dbReference type="PANTHER" id="PTHR44051:SF23">
    <property type="entry name" value="GLUTATHIONE S-TRANSFERASE-LIKE PROTEIN TPCF"/>
    <property type="match status" value="1"/>
</dbReference>
<dbReference type="PANTHER" id="PTHR44051">
    <property type="entry name" value="GLUTATHIONE S-TRANSFERASE-RELATED"/>
    <property type="match status" value="1"/>
</dbReference>
<dbReference type="Pfam" id="PF00043">
    <property type="entry name" value="GST_C"/>
    <property type="match status" value="1"/>
</dbReference>
<dbReference type="Pfam" id="PF02798">
    <property type="entry name" value="GST_N"/>
    <property type="match status" value="1"/>
</dbReference>
<dbReference type="SFLD" id="SFLDS00019">
    <property type="entry name" value="Glutathione_Transferase_(cytos"/>
    <property type="match status" value="1"/>
</dbReference>
<dbReference type="SFLD" id="SFLDG01151">
    <property type="entry name" value="Main.2:_Nu-like"/>
    <property type="match status" value="1"/>
</dbReference>
<dbReference type="SUPFAM" id="SSF47616">
    <property type="entry name" value="GST C-terminal domain-like"/>
    <property type="match status" value="1"/>
</dbReference>
<dbReference type="SUPFAM" id="SSF52833">
    <property type="entry name" value="Thioredoxin-like"/>
    <property type="match status" value="1"/>
</dbReference>
<dbReference type="PROSITE" id="PS50405">
    <property type="entry name" value="GST_CTER"/>
    <property type="match status" value="1"/>
</dbReference>
<dbReference type="PROSITE" id="PS50404">
    <property type="entry name" value="GST_NTER"/>
    <property type="match status" value="1"/>
</dbReference>
<feature type="chain" id="PRO_0000437067" description="Glutathione S-transferase-like protein gedE">
    <location>
        <begin position="1"/>
        <end position="226"/>
    </location>
</feature>
<feature type="domain" description="GST N-terminal" evidence="1">
    <location>
        <begin position="4"/>
        <end position="85"/>
    </location>
</feature>
<feature type="domain" description="GST C-terminal" evidence="2">
    <location>
        <begin position="92"/>
        <end position="226"/>
    </location>
</feature>
<gene>
    <name evidence="10" type="primary">gedE</name>
    <name type="ORF">ATEG_08454</name>
</gene>
<organism>
    <name type="scientific">Aspergillus terreus (strain NIH 2624 / FGSC A1156)</name>
    <dbReference type="NCBI Taxonomy" id="341663"/>
    <lineage>
        <taxon>Eukaryota</taxon>
        <taxon>Fungi</taxon>
        <taxon>Dikarya</taxon>
        <taxon>Ascomycota</taxon>
        <taxon>Pezizomycotina</taxon>
        <taxon>Eurotiomycetes</taxon>
        <taxon>Eurotiomycetidae</taxon>
        <taxon>Eurotiales</taxon>
        <taxon>Aspergillaceae</taxon>
        <taxon>Aspergillus</taxon>
        <taxon>Aspergillus subgen. Circumdati</taxon>
    </lineage>
</organism>
<evidence type="ECO:0000255" key="1">
    <source>
        <dbReference type="PROSITE-ProRule" id="PRU00684"/>
    </source>
</evidence>
<evidence type="ECO:0000255" key="2">
    <source>
        <dbReference type="PROSITE-ProRule" id="PRU00685"/>
    </source>
</evidence>
<evidence type="ECO:0000269" key="3">
    <source>
    </source>
</evidence>
<evidence type="ECO:0000269" key="4">
    <source>
    </source>
</evidence>
<evidence type="ECO:0000269" key="5">
    <source>
    </source>
</evidence>
<evidence type="ECO:0000269" key="6">
    <source>
    </source>
</evidence>
<evidence type="ECO:0000269" key="7">
    <source>
    </source>
</evidence>
<evidence type="ECO:0000269" key="8">
    <source>
    </source>
</evidence>
<evidence type="ECO:0000269" key="9">
    <source>
    </source>
</evidence>
<evidence type="ECO:0000303" key="10">
    <source>
    </source>
</evidence>
<evidence type="ECO:0000305" key="11"/>
<evidence type="ECO:0000305" key="12">
    <source>
    </source>
</evidence>
<comment type="function">
    <text evidence="3 4 5 6 7 8 9">Glutathione S-transferase-like protein; part of the gene cluster that mediates the biosynthesis of geodin, an intermediate in the biosynthesis of other natural products (PubMed:19549600, PubMed:24009710, PubMed:7665560). The pathway begins with the synthesis of atrochrysone thioester by the polyketide synthase (PKS) gedC (PubMed:12536215, PubMed:19549600). The atrochrysone carboxyl ACP thioesterase gedB then breaks the thioester bond and releases the atrochrysone carboxylic acid from gedC (PubMed:19549600). The atrochrysone carboxylic acid is then converted to atrochrysone which is further transformed into emodinanthrone (PubMed:24009710). The next step is performed by the emodinanthrone oxygenase gedH that catalyzes the oxidation of emodinanthrone to emodin (PubMed:1810248). Emodin O-methyltransferase encoded probably by gedA then catalyzes methylation of the 8-hydroxy group of emodin to form questin (PubMed:1444712). Ring cleavage of questin by questin oxidase gedK leads to desmethylsulochrin via several intermediates including questin epoxide (PubMed:3182756). Another methylation step probably catalyzed by methyltransferase gedG leads to the formation of sulochrin which is further converted to dihydrogeodin by the sulochrin halogenase gedL (PubMed:24009710). Finally, the dihydrogeodin oxidase gedJ catalyzes the stereospecific phenol oxidative coupling reaction converting dihydrogeodin to geodin (PubMed:7665560).</text>
</comment>
<comment type="pathway">
    <text evidence="7">Secondary metabolite biosynthesis.</text>
</comment>
<comment type="similarity">
    <text evidence="11">Belongs to the GST superfamily.</text>
</comment>
<name>GEDE_ASPTN</name>
<proteinExistence type="evidence at protein level"/>
<reference key="1">
    <citation type="submission" date="2005-09" db="EMBL/GenBank/DDBJ databases">
        <title>Annotation of the Aspergillus terreus NIH2624 genome.</title>
        <authorList>
            <person name="Birren B.W."/>
            <person name="Lander E.S."/>
            <person name="Galagan J.E."/>
            <person name="Nusbaum C."/>
            <person name="Devon K."/>
            <person name="Henn M."/>
            <person name="Ma L.-J."/>
            <person name="Jaffe D.B."/>
            <person name="Butler J."/>
            <person name="Alvarez P."/>
            <person name="Gnerre S."/>
            <person name="Grabherr M."/>
            <person name="Kleber M."/>
            <person name="Mauceli E.W."/>
            <person name="Brockman W."/>
            <person name="Rounsley S."/>
            <person name="Young S.K."/>
            <person name="LaButti K."/>
            <person name="Pushparaj V."/>
            <person name="DeCaprio D."/>
            <person name="Crawford M."/>
            <person name="Koehrsen M."/>
            <person name="Engels R."/>
            <person name="Montgomery P."/>
            <person name="Pearson M."/>
            <person name="Howarth C."/>
            <person name="Larson L."/>
            <person name="Luoma S."/>
            <person name="White J."/>
            <person name="Alvarado L."/>
            <person name="Kodira C.D."/>
            <person name="Zeng Q."/>
            <person name="Oleary S."/>
            <person name="Yandava C."/>
            <person name="Denning D.W."/>
            <person name="Nierman W.C."/>
            <person name="Milne T."/>
            <person name="Madden K."/>
        </authorList>
    </citation>
    <scope>NUCLEOTIDE SEQUENCE [LARGE SCALE GENOMIC DNA]</scope>
    <source>
        <strain>NIH 2624 / FGSC A1156</strain>
    </source>
</reference>
<reference key="2">
    <citation type="journal article" date="1988" name="J. Biochem.">
        <title>A novel anthraquinone ring cleavage enzyme from Aspergillus terreus.</title>
        <authorList>
            <person name="Fujii I."/>
            <person name="Ebizuka Y."/>
            <person name="Sankawa U."/>
        </authorList>
    </citation>
    <scope>FUNCTION</scope>
</reference>
<reference key="3">
    <citation type="journal article" date="1991" name="Biochem. Int.">
        <title>Identification of emodinanthrone oxygenase in fungus Aspergillus terreus.</title>
        <authorList>
            <person name="Fujii I."/>
            <person name="Chen Z.G."/>
            <person name="Ebizuka Y."/>
            <person name="Sankawa U."/>
        </authorList>
    </citation>
    <scope>FUNCTION</scope>
</reference>
<reference key="4">
    <citation type="journal article" date="1992" name="Arch. Microbiol.">
        <title>Emodin O-methyltransferase from Aspergillus terreus.</title>
        <authorList>
            <person name="Chen Z.G."/>
            <person name="Fujii I."/>
            <person name="Ebizuka Y."/>
            <person name="Sankawa U."/>
        </authorList>
    </citation>
    <scope>FUNCTION</scope>
</reference>
<reference key="5">
    <citation type="journal article" date="1995" name="J. Biol. Chem.">
        <title>Molecular cloning and heterologous expression of the gene encoding dihydrogeodin oxidase, a multicopper blue enzyme from Aspergillus terreus.</title>
        <authorList>
            <person name="Huang K.X."/>
            <person name="Fujii I."/>
            <person name="Ebizuka Y."/>
            <person name="Gomi K."/>
            <person name="Sankawa U."/>
        </authorList>
    </citation>
    <scope>FUNCTION</scope>
</reference>
<reference key="6">
    <citation type="journal article" date="2003" name="Nat. Biotechnol.">
        <title>Integrating transcriptional and metabolite profiles to direct the engineering of lovastatin-producing fungal strains.</title>
        <authorList>
            <person name="Askenazi M."/>
            <person name="Driggers E.M."/>
            <person name="Holtzman D.A."/>
            <person name="Norman T.C."/>
            <person name="Iverson S."/>
            <person name="Zimmer D.P."/>
            <person name="Boers M.E."/>
            <person name="Blomquist P.R."/>
            <person name="Martinez E.J."/>
            <person name="Monreal A.W."/>
            <person name="Feibelman T.P."/>
            <person name="Mayorga M.E."/>
            <person name="Maxon M.E."/>
            <person name="Sykes K."/>
            <person name="Tobin J.V."/>
            <person name="Cordero E."/>
            <person name="Salama S.R."/>
            <person name="Trueheart J."/>
            <person name="Royer J.C."/>
            <person name="Madden K.T."/>
        </authorList>
    </citation>
    <scope>FUNCTION</scope>
</reference>
<reference key="7">
    <citation type="journal article" date="2009" name="Chem. Biol.">
        <title>Physically discrete beta-lactamase-type thioesterase catalyzes product release in atrochrysone synthesis by iterative type I polyketide synthase.</title>
        <authorList>
            <person name="Awakawa T."/>
            <person name="Yokota K."/>
            <person name="Funa N."/>
            <person name="Doi F."/>
            <person name="Mori N."/>
            <person name="Watanabe H."/>
            <person name="Horinouchi S."/>
        </authorList>
    </citation>
    <scope>FUNCTION</scope>
    <scope>CATALYTIC ACTIVITY</scope>
</reference>
<reference key="8">
    <citation type="journal article" date="2013" name="PLoS ONE">
        <title>Heterologous reconstitution of the intact geodin gene cluster in Aspergillus nidulans through a simple and versatile PCR based approach.</title>
        <authorList>
            <person name="Nielsen M.T."/>
            <person name="Nielsen J.B."/>
            <person name="Anyaogu D.C."/>
            <person name="Holm D.K."/>
            <person name="Nielsen K.F."/>
            <person name="Larsen T.O."/>
            <person name="Mortensen U.H."/>
        </authorList>
    </citation>
    <scope>FUNCTION</scope>
</reference>
<keyword id="KW-1185">Reference proteome</keyword>
<keyword id="KW-0808">Transferase</keyword>